<sequence>MSEKEIWEKVLEIAQEKLSAVSYSTFLKDTELYTIKDGEAIVLSSIPFNANWLNQQYAEIIQAILFDVVGYEVKPHFITTEELANYSNNETATPKETTKPSTETTEDNHVLGREQFNAHNTFDTFVIGPGNRFPHAASLAVAEAPAKAYNPLFIYGGVGLGKTHLMHAIGHHVLDNNPDAKVIYTSSEKFTNEFIKSIRDNEGEAFRERYRNIDVLLIDDIQFIQNKVQTQEEFFYTFNELHQNNKQIVISSDRPPKEIAQLEDRLRSRFEWGLIVDITPPDYETRMAILQKKIEEEKLDIPPEALNYIANQIQSNIRELEGALTRLLAYSQLLGKPITTELTAEALKDIIQAPKSKKITIQDIQKIVGQYYNVRIEDFSAKKRTKSIAYPRQIAMYLSRELTDFSLPKIGEEFGGRDHTTVIHAHEKISKDLKEDPIFKQEVENLEKEIRNV</sequence>
<comment type="function">
    <text evidence="1">Plays an essential role in the initiation and regulation of chromosomal replication. ATP-DnaA binds to the origin of replication (oriC) to initiate formation of the DNA replication initiation complex once per cell cycle. Binds the DnaA box (a 9 base pair repeat at the origin) and separates the double-stranded (ds)DNA. Forms a right-handed helical filament on oriC DNA; dsDNA binds to the exterior of the filament while single-stranded (ss)DNA is stabiized in the filament's interior. The ATP-DnaA-oriC complex binds and stabilizes one strand of the AT-rich DNA unwinding element (DUE), permitting loading of DNA polymerase. After initiation quickly degrades to an ADP-DnaA complex that is not apt for DNA replication. Binds acidic phospholipids.</text>
</comment>
<comment type="subunit">
    <text evidence="1">Oligomerizes as a right-handed, spiral filament on DNA at oriC.</text>
</comment>
<comment type="subcellular location">
    <subcellularLocation>
        <location evidence="1">Cytoplasm</location>
    </subcellularLocation>
</comment>
<comment type="domain">
    <text evidence="1">Domain I is involved in oligomerization and binding regulators, domain II is flexibile and of varying length in different bacteria, domain III forms the AAA+ region, while domain IV binds dsDNA.</text>
</comment>
<comment type="similarity">
    <text evidence="1">Belongs to the DnaA family.</text>
</comment>
<gene>
    <name evidence="1" type="primary">dnaA</name>
    <name type="ordered locus">USA300HOU_0001</name>
</gene>
<accession>A8YYS4</accession>
<feature type="chain" id="PRO_1000079968" description="Chromosomal replication initiator protein DnaA">
    <location>
        <begin position="1"/>
        <end position="453"/>
    </location>
</feature>
<feature type="region of interest" description="Domain I, interacts with DnaA modulators" evidence="1">
    <location>
        <begin position="1"/>
        <end position="71"/>
    </location>
</feature>
<feature type="region of interest" description="Domain II" evidence="1">
    <location>
        <begin position="71"/>
        <end position="114"/>
    </location>
</feature>
<feature type="region of interest" description="Domain III, AAA+ region" evidence="1">
    <location>
        <begin position="115"/>
        <end position="331"/>
    </location>
</feature>
<feature type="region of interest" description="Domain IV, binds dsDNA" evidence="1">
    <location>
        <begin position="332"/>
        <end position="453"/>
    </location>
</feature>
<feature type="binding site" evidence="1">
    <location>
        <position position="159"/>
    </location>
    <ligand>
        <name>ATP</name>
        <dbReference type="ChEBI" id="CHEBI:30616"/>
    </ligand>
</feature>
<feature type="binding site" evidence="1">
    <location>
        <position position="161"/>
    </location>
    <ligand>
        <name>ATP</name>
        <dbReference type="ChEBI" id="CHEBI:30616"/>
    </ligand>
</feature>
<feature type="binding site" evidence="1">
    <location>
        <position position="162"/>
    </location>
    <ligand>
        <name>ATP</name>
        <dbReference type="ChEBI" id="CHEBI:30616"/>
    </ligand>
</feature>
<feature type="binding site" evidence="1">
    <location>
        <position position="163"/>
    </location>
    <ligand>
        <name>ATP</name>
        <dbReference type="ChEBI" id="CHEBI:30616"/>
    </ligand>
</feature>
<name>DNAA_STAAT</name>
<protein>
    <recommendedName>
        <fullName evidence="1">Chromosomal replication initiator protein DnaA</fullName>
    </recommendedName>
</protein>
<reference key="1">
    <citation type="journal article" date="2007" name="BMC Microbiol.">
        <title>Subtle genetic changes enhance virulence of methicillin resistant and sensitive Staphylococcus aureus.</title>
        <authorList>
            <person name="Highlander S.K."/>
            <person name="Hulten K.G."/>
            <person name="Qin X."/>
            <person name="Jiang H."/>
            <person name="Yerrapragada S."/>
            <person name="Mason E.O. Jr."/>
            <person name="Shang Y."/>
            <person name="Williams T.M."/>
            <person name="Fortunov R.M."/>
            <person name="Liu Y."/>
            <person name="Igboeli O."/>
            <person name="Petrosino J."/>
            <person name="Tirumalai M."/>
            <person name="Uzman A."/>
            <person name="Fox G.E."/>
            <person name="Cardenas A.M."/>
            <person name="Muzny D.M."/>
            <person name="Hemphill L."/>
            <person name="Ding Y."/>
            <person name="Dugan S."/>
            <person name="Blyth P.R."/>
            <person name="Buhay C.J."/>
            <person name="Dinh H.H."/>
            <person name="Hawes A.C."/>
            <person name="Holder M."/>
            <person name="Kovar C.L."/>
            <person name="Lee S.L."/>
            <person name="Liu W."/>
            <person name="Nazareth L.V."/>
            <person name="Wang Q."/>
            <person name="Zhou J."/>
            <person name="Kaplan S.L."/>
            <person name="Weinstock G.M."/>
        </authorList>
    </citation>
    <scope>NUCLEOTIDE SEQUENCE [LARGE SCALE GENOMIC DNA]</scope>
    <source>
        <strain>USA300 / TCH1516</strain>
    </source>
</reference>
<proteinExistence type="inferred from homology"/>
<keyword id="KW-0067">ATP-binding</keyword>
<keyword id="KW-0963">Cytoplasm</keyword>
<keyword id="KW-0235">DNA replication</keyword>
<keyword id="KW-0238">DNA-binding</keyword>
<keyword id="KW-0446">Lipid-binding</keyword>
<keyword id="KW-0547">Nucleotide-binding</keyword>
<dbReference type="EMBL" id="CP000730">
    <property type="protein sequence ID" value="ABX28047.1"/>
    <property type="molecule type" value="Genomic_DNA"/>
</dbReference>
<dbReference type="RefSeq" id="WP_001290433.1">
    <property type="nucleotide sequence ID" value="NC_010079.1"/>
</dbReference>
<dbReference type="SMR" id="A8YYS4"/>
<dbReference type="KEGG" id="sax:USA300HOU_0001"/>
<dbReference type="HOGENOM" id="CLU_026910_3_1_9"/>
<dbReference type="GO" id="GO:0005737">
    <property type="term" value="C:cytoplasm"/>
    <property type="evidence" value="ECO:0007669"/>
    <property type="project" value="UniProtKB-SubCell"/>
</dbReference>
<dbReference type="GO" id="GO:0005886">
    <property type="term" value="C:plasma membrane"/>
    <property type="evidence" value="ECO:0007669"/>
    <property type="project" value="TreeGrafter"/>
</dbReference>
<dbReference type="GO" id="GO:0005524">
    <property type="term" value="F:ATP binding"/>
    <property type="evidence" value="ECO:0007669"/>
    <property type="project" value="UniProtKB-UniRule"/>
</dbReference>
<dbReference type="GO" id="GO:0016887">
    <property type="term" value="F:ATP hydrolysis activity"/>
    <property type="evidence" value="ECO:0007669"/>
    <property type="project" value="InterPro"/>
</dbReference>
<dbReference type="GO" id="GO:0003688">
    <property type="term" value="F:DNA replication origin binding"/>
    <property type="evidence" value="ECO:0007669"/>
    <property type="project" value="UniProtKB-UniRule"/>
</dbReference>
<dbReference type="GO" id="GO:0008289">
    <property type="term" value="F:lipid binding"/>
    <property type="evidence" value="ECO:0007669"/>
    <property type="project" value="UniProtKB-KW"/>
</dbReference>
<dbReference type="GO" id="GO:0006270">
    <property type="term" value="P:DNA replication initiation"/>
    <property type="evidence" value="ECO:0007669"/>
    <property type="project" value="UniProtKB-UniRule"/>
</dbReference>
<dbReference type="GO" id="GO:0006275">
    <property type="term" value="P:regulation of DNA replication"/>
    <property type="evidence" value="ECO:0007669"/>
    <property type="project" value="UniProtKB-UniRule"/>
</dbReference>
<dbReference type="CDD" id="cd00009">
    <property type="entry name" value="AAA"/>
    <property type="match status" value="1"/>
</dbReference>
<dbReference type="CDD" id="cd06571">
    <property type="entry name" value="Bac_DnaA_C"/>
    <property type="match status" value="1"/>
</dbReference>
<dbReference type="FunFam" id="1.10.1750.10:FF:000003">
    <property type="entry name" value="Chromosomal replication initiator protein DnaA"/>
    <property type="match status" value="1"/>
</dbReference>
<dbReference type="FunFam" id="1.10.8.60:FF:000003">
    <property type="entry name" value="Chromosomal replication initiator protein DnaA"/>
    <property type="match status" value="1"/>
</dbReference>
<dbReference type="FunFam" id="3.40.50.300:FF:000150">
    <property type="entry name" value="Chromosomal replication initiator protein DnaA"/>
    <property type="match status" value="1"/>
</dbReference>
<dbReference type="Gene3D" id="1.10.1750.10">
    <property type="match status" value="1"/>
</dbReference>
<dbReference type="Gene3D" id="1.10.8.60">
    <property type="match status" value="1"/>
</dbReference>
<dbReference type="Gene3D" id="3.30.300.180">
    <property type="match status" value="1"/>
</dbReference>
<dbReference type="Gene3D" id="3.40.50.300">
    <property type="entry name" value="P-loop containing nucleotide triphosphate hydrolases"/>
    <property type="match status" value="1"/>
</dbReference>
<dbReference type="HAMAP" id="MF_00377">
    <property type="entry name" value="DnaA_bact"/>
    <property type="match status" value="1"/>
</dbReference>
<dbReference type="InterPro" id="IPR003593">
    <property type="entry name" value="AAA+_ATPase"/>
</dbReference>
<dbReference type="InterPro" id="IPR001957">
    <property type="entry name" value="Chromosome_initiator_DnaA"/>
</dbReference>
<dbReference type="InterPro" id="IPR020591">
    <property type="entry name" value="Chromosome_initiator_DnaA-like"/>
</dbReference>
<dbReference type="InterPro" id="IPR018312">
    <property type="entry name" value="Chromosome_initiator_DnaA_CS"/>
</dbReference>
<dbReference type="InterPro" id="IPR013159">
    <property type="entry name" value="DnaA_C"/>
</dbReference>
<dbReference type="InterPro" id="IPR013317">
    <property type="entry name" value="DnaA_dom"/>
</dbReference>
<dbReference type="InterPro" id="IPR024633">
    <property type="entry name" value="DnaA_N_dom"/>
</dbReference>
<dbReference type="InterPro" id="IPR038454">
    <property type="entry name" value="DnaA_N_sf"/>
</dbReference>
<dbReference type="InterPro" id="IPR027417">
    <property type="entry name" value="P-loop_NTPase"/>
</dbReference>
<dbReference type="InterPro" id="IPR010921">
    <property type="entry name" value="Trp_repressor/repl_initiator"/>
</dbReference>
<dbReference type="NCBIfam" id="TIGR00362">
    <property type="entry name" value="DnaA"/>
    <property type="match status" value="1"/>
</dbReference>
<dbReference type="PANTHER" id="PTHR30050">
    <property type="entry name" value="CHROMOSOMAL REPLICATION INITIATOR PROTEIN DNAA"/>
    <property type="match status" value="1"/>
</dbReference>
<dbReference type="PANTHER" id="PTHR30050:SF2">
    <property type="entry name" value="CHROMOSOMAL REPLICATION INITIATOR PROTEIN DNAA"/>
    <property type="match status" value="1"/>
</dbReference>
<dbReference type="Pfam" id="PF00308">
    <property type="entry name" value="Bac_DnaA"/>
    <property type="match status" value="1"/>
</dbReference>
<dbReference type="Pfam" id="PF08299">
    <property type="entry name" value="Bac_DnaA_C"/>
    <property type="match status" value="1"/>
</dbReference>
<dbReference type="Pfam" id="PF11638">
    <property type="entry name" value="DnaA_N"/>
    <property type="match status" value="1"/>
</dbReference>
<dbReference type="PRINTS" id="PR00051">
    <property type="entry name" value="DNAA"/>
</dbReference>
<dbReference type="SMART" id="SM00382">
    <property type="entry name" value="AAA"/>
    <property type="match status" value="1"/>
</dbReference>
<dbReference type="SMART" id="SM00760">
    <property type="entry name" value="Bac_DnaA_C"/>
    <property type="match status" value="1"/>
</dbReference>
<dbReference type="SUPFAM" id="SSF52540">
    <property type="entry name" value="P-loop containing nucleoside triphosphate hydrolases"/>
    <property type="match status" value="1"/>
</dbReference>
<dbReference type="SUPFAM" id="SSF48295">
    <property type="entry name" value="TrpR-like"/>
    <property type="match status" value="1"/>
</dbReference>
<dbReference type="PROSITE" id="PS01008">
    <property type="entry name" value="DNAA"/>
    <property type="match status" value="1"/>
</dbReference>
<evidence type="ECO:0000255" key="1">
    <source>
        <dbReference type="HAMAP-Rule" id="MF_00377"/>
    </source>
</evidence>
<organism>
    <name type="scientific">Staphylococcus aureus (strain USA300 / TCH1516)</name>
    <dbReference type="NCBI Taxonomy" id="451516"/>
    <lineage>
        <taxon>Bacteria</taxon>
        <taxon>Bacillati</taxon>
        <taxon>Bacillota</taxon>
        <taxon>Bacilli</taxon>
        <taxon>Bacillales</taxon>
        <taxon>Staphylococcaceae</taxon>
        <taxon>Staphylococcus</taxon>
    </lineage>
</organism>